<keyword id="KW-0001">2Fe-2S</keyword>
<keyword id="KW-0028">Amino-acid biosynthesis</keyword>
<keyword id="KW-0100">Branched-chain amino acid biosynthesis</keyword>
<keyword id="KW-0408">Iron</keyword>
<keyword id="KW-0411">Iron-sulfur</keyword>
<keyword id="KW-0456">Lyase</keyword>
<keyword id="KW-0460">Magnesium</keyword>
<keyword id="KW-0479">Metal-binding</keyword>
<dbReference type="EC" id="4.2.1.9" evidence="1"/>
<dbReference type="EMBL" id="BX640438">
    <property type="protein sequence ID" value="CAE30929.1"/>
    <property type="molecule type" value="Genomic_DNA"/>
</dbReference>
<dbReference type="SMR" id="Q7WQA2"/>
<dbReference type="KEGG" id="bbr:BB0431"/>
<dbReference type="eggNOG" id="COG0129">
    <property type="taxonomic scope" value="Bacteria"/>
</dbReference>
<dbReference type="HOGENOM" id="CLU_014271_4_2_4"/>
<dbReference type="UniPathway" id="UPA00047">
    <property type="reaction ID" value="UER00057"/>
</dbReference>
<dbReference type="UniPathway" id="UPA00049">
    <property type="reaction ID" value="UER00061"/>
</dbReference>
<dbReference type="Proteomes" id="UP000001027">
    <property type="component" value="Chromosome"/>
</dbReference>
<dbReference type="GO" id="GO:0005829">
    <property type="term" value="C:cytosol"/>
    <property type="evidence" value="ECO:0007669"/>
    <property type="project" value="TreeGrafter"/>
</dbReference>
<dbReference type="GO" id="GO:0051537">
    <property type="term" value="F:2 iron, 2 sulfur cluster binding"/>
    <property type="evidence" value="ECO:0007669"/>
    <property type="project" value="UniProtKB-UniRule"/>
</dbReference>
<dbReference type="GO" id="GO:0004160">
    <property type="term" value="F:dihydroxy-acid dehydratase activity"/>
    <property type="evidence" value="ECO:0007669"/>
    <property type="project" value="UniProtKB-UniRule"/>
</dbReference>
<dbReference type="GO" id="GO:0000287">
    <property type="term" value="F:magnesium ion binding"/>
    <property type="evidence" value="ECO:0007669"/>
    <property type="project" value="UniProtKB-UniRule"/>
</dbReference>
<dbReference type="GO" id="GO:0009097">
    <property type="term" value="P:isoleucine biosynthetic process"/>
    <property type="evidence" value="ECO:0007669"/>
    <property type="project" value="UniProtKB-UniRule"/>
</dbReference>
<dbReference type="GO" id="GO:0009099">
    <property type="term" value="P:L-valine biosynthetic process"/>
    <property type="evidence" value="ECO:0007669"/>
    <property type="project" value="UniProtKB-UniRule"/>
</dbReference>
<dbReference type="FunFam" id="3.50.30.80:FF:000001">
    <property type="entry name" value="Dihydroxy-acid dehydratase"/>
    <property type="match status" value="1"/>
</dbReference>
<dbReference type="Gene3D" id="3.50.30.80">
    <property type="entry name" value="IlvD/EDD C-terminal domain-like"/>
    <property type="match status" value="1"/>
</dbReference>
<dbReference type="HAMAP" id="MF_00012">
    <property type="entry name" value="IlvD"/>
    <property type="match status" value="1"/>
</dbReference>
<dbReference type="InterPro" id="IPR042096">
    <property type="entry name" value="Dihydro-acid_dehy_C"/>
</dbReference>
<dbReference type="InterPro" id="IPR004404">
    <property type="entry name" value="DihydroxyA_deHydtase"/>
</dbReference>
<dbReference type="InterPro" id="IPR020558">
    <property type="entry name" value="DiOHA_6PGluconate_deHydtase_CS"/>
</dbReference>
<dbReference type="InterPro" id="IPR056740">
    <property type="entry name" value="ILV_EDD_C"/>
</dbReference>
<dbReference type="InterPro" id="IPR000581">
    <property type="entry name" value="ILV_EDD_N"/>
</dbReference>
<dbReference type="InterPro" id="IPR037237">
    <property type="entry name" value="IlvD/EDD_N"/>
</dbReference>
<dbReference type="NCBIfam" id="TIGR00110">
    <property type="entry name" value="ilvD"/>
    <property type="match status" value="1"/>
</dbReference>
<dbReference type="NCBIfam" id="NF009103">
    <property type="entry name" value="PRK12448.1"/>
    <property type="match status" value="1"/>
</dbReference>
<dbReference type="PANTHER" id="PTHR43661">
    <property type="entry name" value="D-XYLONATE DEHYDRATASE"/>
    <property type="match status" value="1"/>
</dbReference>
<dbReference type="PANTHER" id="PTHR43661:SF3">
    <property type="entry name" value="D-XYLONATE DEHYDRATASE YAGF-RELATED"/>
    <property type="match status" value="1"/>
</dbReference>
<dbReference type="Pfam" id="PF24877">
    <property type="entry name" value="ILV_EDD_C"/>
    <property type="match status" value="1"/>
</dbReference>
<dbReference type="Pfam" id="PF00920">
    <property type="entry name" value="ILVD_EDD_N"/>
    <property type="match status" value="1"/>
</dbReference>
<dbReference type="SUPFAM" id="SSF143975">
    <property type="entry name" value="IlvD/EDD N-terminal domain-like"/>
    <property type="match status" value="1"/>
</dbReference>
<dbReference type="SUPFAM" id="SSF52016">
    <property type="entry name" value="LeuD/IlvD-like"/>
    <property type="match status" value="1"/>
</dbReference>
<dbReference type="PROSITE" id="PS00886">
    <property type="entry name" value="ILVD_EDD_1"/>
    <property type="match status" value="1"/>
</dbReference>
<dbReference type="PROSITE" id="PS00887">
    <property type="entry name" value="ILVD_EDD_2"/>
    <property type="match status" value="1"/>
</dbReference>
<gene>
    <name evidence="1" type="primary">ilvD1</name>
    <name type="ordered locus">BB0431</name>
</gene>
<organism>
    <name type="scientific">Bordetella bronchiseptica (strain ATCC BAA-588 / NCTC 13252 / RB50)</name>
    <name type="common">Alcaligenes bronchisepticus</name>
    <dbReference type="NCBI Taxonomy" id="257310"/>
    <lineage>
        <taxon>Bacteria</taxon>
        <taxon>Pseudomonadati</taxon>
        <taxon>Pseudomonadota</taxon>
        <taxon>Betaproteobacteria</taxon>
        <taxon>Burkholderiales</taxon>
        <taxon>Alcaligenaceae</taxon>
        <taxon>Bordetella</taxon>
    </lineage>
</organism>
<proteinExistence type="inferred from homology"/>
<feature type="chain" id="PRO_0000103434" description="Dihydroxy-acid dehydratase 1">
    <location>
        <begin position="1"/>
        <end position="619"/>
    </location>
</feature>
<feature type="active site" description="Proton acceptor" evidence="1">
    <location>
        <position position="520"/>
    </location>
</feature>
<feature type="binding site" evidence="1">
    <location>
        <position position="81"/>
    </location>
    <ligand>
        <name>Mg(2+)</name>
        <dbReference type="ChEBI" id="CHEBI:18420"/>
    </ligand>
</feature>
<feature type="binding site" evidence="1">
    <location>
        <position position="122"/>
    </location>
    <ligand>
        <name>[2Fe-2S] cluster</name>
        <dbReference type="ChEBI" id="CHEBI:190135"/>
    </ligand>
</feature>
<feature type="binding site" evidence="1">
    <location>
        <position position="123"/>
    </location>
    <ligand>
        <name>Mg(2+)</name>
        <dbReference type="ChEBI" id="CHEBI:18420"/>
    </ligand>
</feature>
<feature type="binding site" description="via carbamate group" evidence="1">
    <location>
        <position position="124"/>
    </location>
    <ligand>
        <name>Mg(2+)</name>
        <dbReference type="ChEBI" id="CHEBI:18420"/>
    </ligand>
</feature>
<feature type="binding site" evidence="1">
    <location>
        <position position="198"/>
    </location>
    <ligand>
        <name>[2Fe-2S] cluster</name>
        <dbReference type="ChEBI" id="CHEBI:190135"/>
    </ligand>
</feature>
<feature type="binding site" evidence="1">
    <location>
        <position position="494"/>
    </location>
    <ligand>
        <name>Mg(2+)</name>
        <dbReference type="ChEBI" id="CHEBI:18420"/>
    </ligand>
</feature>
<feature type="modified residue" description="N6-carboxylysine" evidence="1">
    <location>
        <position position="124"/>
    </location>
</feature>
<sequence>MPHYRSRTSTHGRNMAGARALWRATGMKDGDFGKPIIAVVNSFTQFVPGHVHLRDLGALVASEIEAAGGVAKEFNTIAVDDGIAMGHGGMLYSLPSRELIADSVEYMVNAHCADAMVCISNCDKITPGMLMAAMRLNIPVVFVSGGPMEAGKITSPVDGKVIAKLDLVDAMIKAADPNVSDAEAEEVERSACPTCGSCSGMFTANSMNCLTEAIGLALPGNGTIVATHAWRKGLFEQAGRLVVELCRRYYEQDDASVLPRSIATKSAFENAMTLDVAMGGSTNTVLHLLAAAQEAGVDFTMSDIDRISRRVPCLCKAAPATDKYHIEDVHRAGGILGILGELGRADLLDLSCGNVHSGTLGEAINQWDINGGAGEAAQKFFRAAPGGIPTTVAFSQDATFLTLDMDRQTGCIRDKAHAYSQDGGLAVLYGNLAEKGCIVKTAGVDESQWVFTGRARVFESQEDAVEGILGDRVQAGDVVIIRYEGPKGGPGMQEMLYPTSYLKSKGLGKTCALFTDGRFSGGSSGLVIGHASPEAAEGGTIGLVEEGDTIEIDIPNRRIHLAVGDTVLAERRAAMQARGEQAWQPVDRERVVSQALRAYAALATSADRGAVRDLSQLKR</sequence>
<name>ILVD1_BORBR</name>
<protein>
    <recommendedName>
        <fullName evidence="1">Dihydroxy-acid dehydratase 1</fullName>
        <shortName evidence="1">DAD 1</shortName>
        <ecNumber evidence="1">4.2.1.9</ecNumber>
    </recommendedName>
</protein>
<accession>Q7WQA2</accession>
<evidence type="ECO:0000255" key="1">
    <source>
        <dbReference type="HAMAP-Rule" id="MF_00012"/>
    </source>
</evidence>
<reference key="1">
    <citation type="journal article" date="2003" name="Nat. Genet.">
        <title>Comparative analysis of the genome sequences of Bordetella pertussis, Bordetella parapertussis and Bordetella bronchiseptica.</title>
        <authorList>
            <person name="Parkhill J."/>
            <person name="Sebaihia M."/>
            <person name="Preston A."/>
            <person name="Murphy L.D."/>
            <person name="Thomson N.R."/>
            <person name="Harris D.E."/>
            <person name="Holden M.T.G."/>
            <person name="Churcher C.M."/>
            <person name="Bentley S.D."/>
            <person name="Mungall K.L."/>
            <person name="Cerdeno-Tarraga A.-M."/>
            <person name="Temple L."/>
            <person name="James K.D."/>
            <person name="Harris B."/>
            <person name="Quail M.A."/>
            <person name="Achtman M."/>
            <person name="Atkin R."/>
            <person name="Baker S."/>
            <person name="Basham D."/>
            <person name="Bason N."/>
            <person name="Cherevach I."/>
            <person name="Chillingworth T."/>
            <person name="Collins M."/>
            <person name="Cronin A."/>
            <person name="Davis P."/>
            <person name="Doggett J."/>
            <person name="Feltwell T."/>
            <person name="Goble A."/>
            <person name="Hamlin N."/>
            <person name="Hauser H."/>
            <person name="Holroyd S."/>
            <person name="Jagels K."/>
            <person name="Leather S."/>
            <person name="Moule S."/>
            <person name="Norberczak H."/>
            <person name="O'Neil S."/>
            <person name="Ormond D."/>
            <person name="Price C."/>
            <person name="Rabbinowitsch E."/>
            <person name="Rutter S."/>
            <person name="Sanders M."/>
            <person name="Saunders D."/>
            <person name="Seeger K."/>
            <person name="Sharp S."/>
            <person name="Simmonds M."/>
            <person name="Skelton J."/>
            <person name="Squares R."/>
            <person name="Squares S."/>
            <person name="Stevens K."/>
            <person name="Unwin L."/>
            <person name="Whitehead S."/>
            <person name="Barrell B.G."/>
            <person name="Maskell D.J."/>
        </authorList>
    </citation>
    <scope>NUCLEOTIDE SEQUENCE [LARGE SCALE GENOMIC DNA]</scope>
    <source>
        <strain>ATCC BAA-588 / NCTC 13252 / RB50</strain>
    </source>
</reference>
<comment type="function">
    <text evidence="1">Functions in the biosynthesis of branched-chain amino acids. Catalyzes the dehydration of (2R,3R)-2,3-dihydroxy-3-methylpentanoate (2,3-dihydroxy-3-methylvalerate) into 2-oxo-3-methylpentanoate (2-oxo-3-methylvalerate) and of (2R)-2,3-dihydroxy-3-methylbutanoate (2,3-dihydroxyisovalerate) into 2-oxo-3-methylbutanoate (2-oxoisovalerate), the penultimate precursor to L-isoleucine and L-valine, respectively.</text>
</comment>
<comment type="catalytic activity">
    <reaction evidence="1">
        <text>(2R)-2,3-dihydroxy-3-methylbutanoate = 3-methyl-2-oxobutanoate + H2O</text>
        <dbReference type="Rhea" id="RHEA:24809"/>
        <dbReference type="ChEBI" id="CHEBI:11851"/>
        <dbReference type="ChEBI" id="CHEBI:15377"/>
        <dbReference type="ChEBI" id="CHEBI:49072"/>
        <dbReference type="EC" id="4.2.1.9"/>
    </reaction>
    <physiologicalReaction direction="left-to-right" evidence="1">
        <dbReference type="Rhea" id="RHEA:24810"/>
    </physiologicalReaction>
</comment>
<comment type="catalytic activity">
    <reaction evidence="1">
        <text>(2R,3R)-2,3-dihydroxy-3-methylpentanoate = (S)-3-methyl-2-oxopentanoate + H2O</text>
        <dbReference type="Rhea" id="RHEA:27694"/>
        <dbReference type="ChEBI" id="CHEBI:15377"/>
        <dbReference type="ChEBI" id="CHEBI:35146"/>
        <dbReference type="ChEBI" id="CHEBI:49258"/>
        <dbReference type="EC" id="4.2.1.9"/>
    </reaction>
    <physiologicalReaction direction="left-to-right" evidence="1">
        <dbReference type="Rhea" id="RHEA:27695"/>
    </physiologicalReaction>
</comment>
<comment type="cofactor">
    <cofactor evidence="1">
        <name>[2Fe-2S] cluster</name>
        <dbReference type="ChEBI" id="CHEBI:190135"/>
    </cofactor>
    <text evidence="1">Binds 1 [2Fe-2S] cluster per subunit. This cluster acts as a Lewis acid cofactor.</text>
</comment>
<comment type="cofactor">
    <cofactor evidence="1">
        <name>Mg(2+)</name>
        <dbReference type="ChEBI" id="CHEBI:18420"/>
    </cofactor>
</comment>
<comment type="pathway">
    <text evidence="1">Amino-acid biosynthesis; L-isoleucine biosynthesis; L-isoleucine from 2-oxobutanoate: step 3/4.</text>
</comment>
<comment type="pathway">
    <text evidence="1">Amino-acid biosynthesis; L-valine biosynthesis; L-valine from pyruvate: step 3/4.</text>
</comment>
<comment type="subunit">
    <text evidence="1">Homodimer.</text>
</comment>
<comment type="similarity">
    <text evidence="1">Belongs to the IlvD/Edd family.</text>
</comment>